<organism>
    <name type="scientific">Thiobacillus denitrificans (strain ATCC 25259 / T1)</name>
    <dbReference type="NCBI Taxonomy" id="292415"/>
    <lineage>
        <taxon>Bacteria</taxon>
        <taxon>Pseudomonadati</taxon>
        <taxon>Pseudomonadota</taxon>
        <taxon>Betaproteobacteria</taxon>
        <taxon>Nitrosomonadales</taxon>
        <taxon>Thiobacillaceae</taxon>
        <taxon>Thiobacillus</taxon>
    </lineage>
</organism>
<accession>Q3SHL1</accession>
<proteinExistence type="inferred from homology"/>
<feature type="chain" id="PRO_0000076835" description="3-isopropylmalate dehydratase large subunit">
    <location>
        <begin position="1"/>
        <end position="467"/>
    </location>
</feature>
<feature type="binding site" evidence="1">
    <location>
        <position position="348"/>
    </location>
    <ligand>
        <name>[4Fe-4S] cluster</name>
        <dbReference type="ChEBI" id="CHEBI:49883"/>
    </ligand>
</feature>
<feature type="binding site" evidence="1">
    <location>
        <position position="409"/>
    </location>
    <ligand>
        <name>[4Fe-4S] cluster</name>
        <dbReference type="ChEBI" id="CHEBI:49883"/>
    </ligand>
</feature>
<feature type="binding site" evidence="1">
    <location>
        <position position="412"/>
    </location>
    <ligand>
        <name>[4Fe-4S] cluster</name>
        <dbReference type="ChEBI" id="CHEBI:49883"/>
    </ligand>
</feature>
<sequence>MAGQTLFQKLWDAHVVHVEPDGTTLLYIDRHLVHEVTSPQAFEGLKLAQRLPRRPDAAIAVPDHNVPTTDRSQGIADPVSRLQVETLDANCAEFGITEFRMDDVRQGIVHVIGPEEGLTLPGMTVVCGDSHTSTHGAFGALAFGIGTSEVEHVLATQCLWQKPSKTMLVKVEGELGKGVTAKDIALAVIGRIGTAGGTGYAIEFGGAAIRALSMEGRMTLCNMAIEAGARAGMVAVDQTTIDYVEGRPYAPTGEAWDTAVAWWKTLHSDADAVFDRVVELDAAAIEPQVTWGTSPEMVTTVGASVPDPSAAPSEVKRQDWVRALEYMGLAAGTPVSAIALDKVFIGSCTNSRIEDLREAAAVAKGRRVAPNVKLAMVVPGSGLVKQQAEAEGLDRIFIDAGFEWREPGCSMCLAMNADRLEPGERCASTSNRNFEGRQGQGGRTHLVSPAMAAAAACAGHFVDVRNF</sequence>
<keyword id="KW-0004">4Fe-4S</keyword>
<keyword id="KW-0028">Amino-acid biosynthesis</keyword>
<keyword id="KW-0100">Branched-chain amino acid biosynthesis</keyword>
<keyword id="KW-0408">Iron</keyword>
<keyword id="KW-0411">Iron-sulfur</keyword>
<keyword id="KW-0432">Leucine biosynthesis</keyword>
<keyword id="KW-0456">Lyase</keyword>
<keyword id="KW-0479">Metal-binding</keyword>
<keyword id="KW-1185">Reference proteome</keyword>
<reference key="1">
    <citation type="journal article" date="2006" name="J. Bacteriol.">
        <title>The genome sequence of the obligately chemolithoautotrophic, facultatively anaerobic bacterium Thiobacillus denitrificans.</title>
        <authorList>
            <person name="Beller H.R."/>
            <person name="Chain P.S."/>
            <person name="Letain T.E."/>
            <person name="Chakicherla A."/>
            <person name="Larimer F.W."/>
            <person name="Richardson P.M."/>
            <person name="Coleman M.A."/>
            <person name="Wood A.P."/>
            <person name="Kelly D.P."/>
        </authorList>
    </citation>
    <scope>NUCLEOTIDE SEQUENCE [LARGE SCALE GENOMIC DNA]</scope>
    <source>
        <strain>ATCC 25259 / T1</strain>
    </source>
</reference>
<gene>
    <name evidence="1" type="primary">leuC</name>
    <name type="ordered locus">Tbd_1922</name>
</gene>
<dbReference type="EC" id="4.2.1.33" evidence="1"/>
<dbReference type="EMBL" id="CP000116">
    <property type="protein sequence ID" value="AAZ97875.1"/>
    <property type="molecule type" value="Genomic_DNA"/>
</dbReference>
<dbReference type="RefSeq" id="WP_011312434.1">
    <property type="nucleotide sequence ID" value="NC_007404.1"/>
</dbReference>
<dbReference type="SMR" id="Q3SHL1"/>
<dbReference type="STRING" id="292415.Tbd_1922"/>
<dbReference type="KEGG" id="tbd:Tbd_1922"/>
<dbReference type="eggNOG" id="COG0065">
    <property type="taxonomic scope" value="Bacteria"/>
</dbReference>
<dbReference type="HOGENOM" id="CLU_006714_3_4_4"/>
<dbReference type="OrthoDB" id="9802769at2"/>
<dbReference type="UniPathway" id="UPA00048">
    <property type="reaction ID" value="UER00071"/>
</dbReference>
<dbReference type="Proteomes" id="UP000008291">
    <property type="component" value="Chromosome"/>
</dbReference>
<dbReference type="GO" id="GO:0003861">
    <property type="term" value="F:3-isopropylmalate dehydratase activity"/>
    <property type="evidence" value="ECO:0007669"/>
    <property type="project" value="UniProtKB-UniRule"/>
</dbReference>
<dbReference type="GO" id="GO:0051539">
    <property type="term" value="F:4 iron, 4 sulfur cluster binding"/>
    <property type="evidence" value="ECO:0007669"/>
    <property type="project" value="UniProtKB-KW"/>
</dbReference>
<dbReference type="GO" id="GO:0046872">
    <property type="term" value="F:metal ion binding"/>
    <property type="evidence" value="ECO:0007669"/>
    <property type="project" value="UniProtKB-KW"/>
</dbReference>
<dbReference type="GO" id="GO:0009098">
    <property type="term" value="P:L-leucine biosynthetic process"/>
    <property type="evidence" value="ECO:0007669"/>
    <property type="project" value="UniProtKB-UniRule"/>
</dbReference>
<dbReference type="CDD" id="cd01583">
    <property type="entry name" value="IPMI"/>
    <property type="match status" value="1"/>
</dbReference>
<dbReference type="FunFam" id="3.30.499.10:FF:000007">
    <property type="entry name" value="3-isopropylmalate dehydratase large subunit"/>
    <property type="match status" value="1"/>
</dbReference>
<dbReference type="Gene3D" id="3.30.499.10">
    <property type="entry name" value="Aconitase, domain 3"/>
    <property type="match status" value="2"/>
</dbReference>
<dbReference type="HAMAP" id="MF_01026">
    <property type="entry name" value="LeuC_type1"/>
    <property type="match status" value="1"/>
</dbReference>
<dbReference type="InterPro" id="IPR004430">
    <property type="entry name" value="3-IsopropMal_deHydase_lsu"/>
</dbReference>
<dbReference type="InterPro" id="IPR015931">
    <property type="entry name" value="Acnase/IPM_dHydase_lsu_aba_1/3"/>
</dbReference>
<dbReference type="InterPro" id="IPR001030">
    <property type="entry name" value="Acoase/IPM_deHydtase_lsu_aba"/>
</dbReference>
<dbReference type="InterPro" id="IPR018136">
    <property type="entry name" value="Aconitase_4Fe-4S_BS"/>
</dbReference>
<dbReference type="InterPro" id="IPR036008">
    <property type="entry name" value="Aconitase_4Fe-4S_dom"/>
</dbReference>
<dbReference type="InterPro" id="IPR050067">
    <property type="entry name" value="IPM_dehydratase_rel_enz"/>
</dbReference>
<dbReference type="InterPro" id="IPR033941">
    <property type="entry name" value="IPMI_cat"/>
</dbReference>
<dbReference type="NCBIfam" id="TIGR00170">
    <property type="entry name" value="leuC"/>
    <property type="match status" value="1"/>
</dbReference>
<dbReference type="NCBIfam" id="NF004016">
    <property type="entry name" value="PRK05478.1"/>
    <property type="match status" value="1"/>
</dbReference>
<dbReference type="NCBIfam" id="NF009116">
    <property type="entry name" value="PRK12466.1"/>
    <property type="match status" value="1"/>
</dbReference>
<dbReference type="PANTHER" id="PTHR43822:SF9">
    <property type="entry name" value="3-ISOPROPYLMALATE DEHYDRATASE"/>
    <property type="match status" value="1"/>
</dbReference>
<dbReference type="PANTHER" id="PTHR43822">
    <property type="entry name" value="HOMOACONITASE, MITOCHONDRIAL-RELATED"/>
    <property type="match status" value="1"/>
</dbReference>
<dbReference type="Pfam" id="PF00330">
    <property type="entry name" value="Aconitase"/>
    <property type="match status" value="1"/>
</dbReference>
<dbReference type="PRINTS" id="PR00415">
    <property type="entry name" value="ACONITASE"/>
</dbReference>
<dbReference type="SUPFAM" id="SSF53732">
    <property type="entry name" value="Aconitase iron-sulfur domain"/>
    <property type="match status" value="1"/>
</dbReference>
<dbReference type="PROSITE" id="PS00450">
    <property type="entry name" value="ACONITASE_1"/>
    <property type="match status" value="1"/>
</dbReference>
<dbReference type="PROSITE" id="PS01244">
    <property type="entry name" value="ACONITASE_2"/>
    <property type="match status" value="1"/>
</dbReference>
<name>LEUC_THIDA</name>
<protein>
    <recommendedName>
        <fullName evidence="1">3-isopropylmalate dehydratase large subunit</fullName>
        <ecNumber evidence="1">4.2.1.33</ecNumber>
    </recommendedName>
    <alternativeName>
        <fullName evidence="1">Alpha-IPM isomerase</fullName>
        <shortName evidence="1">IPMI</shortName>
    </alternativeName>
    <alternativeName>
        <fullName evidence="1">Isopropylmalate isomerase</fullName>
    </alternativeName>
</protein>
<evidence type="ECO:0000255" key="1">
    <source>
        <dbReference type="HAMAP-Rule" id="MF_01026"/>
    </source>
</evidence>
<comment type="function">
    <text evidence="1">Catalyzes the isomerization between 2-isopropylmalate and 3-isopropylmalate, via the formation of 2-isopropylmaleate.</text>
</comment>
<comment type="catalytic activity">
    <reaction evidence="1">
        <text>(2R,3S)-3-isopropylmalate = (2S)-2-isopropylmalate</text>
        <dbReference type="Rhea" id="RHEA:32287"/>
        <dbReference type="ChEBI" id="CHEBI:1178"/>
        <dbReference type="ChEBI" id="CHEBI:35121"/>
        <dbReference type="EC" id="4.2.1.33"/>
    </reaction>
</comment>
<comment type="cofactor">
    <cofactor evidence="1">
        <name>[4Fe-4S] cluster</name>
        <dbReference type="ChEBI" id="CHEBI:49883"/>
    </cofactor>
    <text evidence="1">Binds 1 [4Fe-4S] cluster per subunit.</text>
</comment>
<comment type="pathway">
    <text evidence="1">Amino-acid biosynthesis; L-leucine biosynthesis; L-leucine from 3-methyl-2-oxobutanoate: step 2/4.</text>
</comment>
<comment type="subunit">
    <text evidence="1">Heterodimer of LeuC and LeuD.</text>
</comment>
<comment type="similarity">
    <text evidence="1">Belongs to the aconitase/IPM isomerase family. LeuC type 1 subfamily.</text>
</comment>